<comment type="function">
    <text evidence="1">Cleaves the N-terminal amino acid of tripeptides.</text>
</comment>
<comment type="catalytic activity">
    <reaction evidence="1">
        <text>Release of the N-terminal residue from a tripeptide.</text>
        <dbReference type="EC" id="3.4.11.4"/>
    </reaction>
</comment>
<comment type="cofactor">
    <cofactor evidence="1">
        <name>Zn(2+)</name>
        <dbReference type="ChEBI" id="CHEBI:29105"/>
    </cofactor>
    <text evidence="1">Binds 2 Zn(2+) ions per subunit.</text>
</comment>
<comment type="subcellular location">
    <subcellularLocation>
        <location evidence="1">Cytoplasm</location>
    </subcellularLocation>
</comment>
<comment type="similarity">
    <text evidence="1">Belongs to the peptidase M20B family.</text>
</comment>
<name>PEPT_BACVZ</name>
<keyword id="KW-0031">Aminopeptidase</keyword>
<keyword id="KW-0963">Cytoplasm</keyword>
<keyword id="KW-0378">Hydrolase</keyword>
<keyword id="KW-0479">Metal-binding</keyword>
<keyword id="KW-0482">Metalloprotease</keyword>
<keyword id="KW-0645">Protease</keyword>
<keyword id="KW-0862">Zinc</keyword>
<organism>
    <name type="scientific">Bacillus velezensis (strain DSM 23117 / BGSC 10A6 / LMG 26770 / FZB42)</name>
    <name type="common">Bacillus amyloliquefaciens subsp. plantarum</name>
    <dbReference type="NCBI Taxonomy" id="326423"/>
    <lineage>
        <taxon>Bacteria</taxon>
        <taxon>Bacillati</taxon>
        <taxon>Bacillota</taxon>
        <taxon>Bacilli</taxon>
        <taxon>Bacillales</taxon>
        <taxon>Bacillaceae</taxon>
        <taxon>Bacillus</taxon>
        <taxon>Bacillus amyloliquefaciens group</taxon>
    </lineage>
</organism>
<gene>
    <name evidence="1" type="primary">pepT</name>
    <name type="ordered locus">RBAM_036090</name>
</gene>
<evidence type="ECO:0000255" key="1">
    <source>
        <dbReference type="HAMAP-Rule" id="MF_00550"/>
    </source>
</evidence>
<accession>A7ZAB2</accession>
<protein>
    <recommendedName>
        <fullName evidence="1">Peptidase T</fullName>
        <ecNumber evidence="1">3.4.11.4</ecNumber>
    </recommendedName>
    <alternativeName>
        <fullName evidence="1">Aminotripeptidase</fullName>
        <shortName evidence="1">Tripeptidase</shortName>
    </alternativeName>
    <alternativeName>
        <fullName evidence="1">Tripeptide aminopeptidase</fullName>
    </alternativeName>
</protein>
<dbReference type="EC" id="3.4.11.4" evidence="1"/>
<dbReference type="EMBL" id="CP000560">
    <property type="protein sequence ID" value="ABS75938.1"/>
    <property type="molecule type" value="Genomic_DNA"/>
</dbReference>
<dbReference type="RefSeq" id="WP_012118789.1">
    <property type="nucleotide sequence ID" value="NC_009725.2"/>
</dbReference>
<dbReference type="SMR" id="A7ZAB2"/>
<dbReference type="MEROPS" id="M20.003"/>
<dbReference type="GeneID" id="93082751"/>
<dbReference type="KEGG" id="bay:RBAM_036090"/>
<dbReference type="HOGENOM" id="CLU_053676_0_0_9"/>
<dbReference type="Proteomes" id="UP000001120">
    <property type="component" value="Chromosome"/>
</dbReference>
<dbReference type="GO" id="GO:0005829">
    <property type="term" value="C:cytosol"/>
    <property type="evidence" value="ECO:0007669"/>
    <property type="project" value="TreeGrafter"/>
</dbReference>
<dbReference type="GO" id="GO:0008237">
    <property type="term" value="F:metallopeptidase activity"/>
    <property type="evidence" value="ECO:0007669"/>
    <property type="project" value="UniProtKB-KW"/>
</dbReference>
<dbReference type="GO" id="GO:0045148">
    <property type="term" value="F:tripeptide aminopeptidase activity"/>
    <property type="evidence" value="ECO:0007669"/>
    <property type="project" value="UniProtKB-UniRule"/>
</dbReference>
<dbReference type="GO" id="GO:0008270">
    <property type="term" value="F:zinc ion binding"/>
    <property type="evidence" value="ECO:0007669"/>
    <property type="project" value="UniProtKB-UniRule"/>
</dbReference>
<dbReference type="GO" id="GO:0043171">
    <property type="term" value="P:peptide catabolic process"/>
    <property type="evidence" value="ECO:0007669"/>
    <property type="project" value="UniProtKB-UniRule"/>
</dbReference>
<dbReference type="GO" id="GO:0006508">
    <property type="term" value="P:proteolysis"/>
    <property type="evidence" value="ECO:0007669"/>
    <property type="project" value="UniProtKB-UniRule"/>
</dbReference>
<dbReference type="CDD" id="cd03892">
    <property type="entry name" value="M20_peptT"/>
    <property type="match status" value="1"/>
</dbReference>
<dbReference type="FunFam" id="3.30.70.360:FF:000002">
    <property type="entry name" value="Peptidase T"/>
    <property type="match status" value="1"/>
</dbReference>
<dbReference type="Gene3D" id="3.30.70.360">
    <property type="match status" value="1"/>
</dbReference>
<dbReference type="Gene3D" id="3.40.630.10">
    <property type="entry name" value="Zn peptidases"/>
    <property type="match status" value="1"/>
</dbReference>
<dbReference type="HAMAP" id="MF_00550">
    <property type="entry name" value="Aminopeptidase_M20"/>
    <property type="match status" value="1"/>
</dbReference>
<dbReference type="InterPro" id="IPR001261">
    <property type="entry name" value="ArgE/DapE_CS"/>
</dbReference>
<dbReference type="InterPro" id="IPR036264">
    <property type="entry name" value="Bact_exopeptidase_dim_dom"/>
</dbReference>
<dbReference type="InterPro" id="IPR002933">
    <property type="entry name" value="Peptidase_M20"/>
</dbReference>
<dbReference type="InterPro" id="IPR011650">
    <property type="entry name" value="Peptidase_M20_dimer"/>
</dbReference>
<dbReference type="InterPro" id="IPR010161">
    <property type="entry name" value="Peptidase_M20B"/>
</dbReference>
<dbReference type="NCBIfam" id="TIGR01882">
    <property type="entry name" value="peptidase-T"/>
    <property type="match status" value="1"/>
</dbReference>
<dbReference type="NCBIfam" id="NF003976">
    <property type="entry name" value="PRK05469.1"/>
    <property type="match status" value="1"/>
</dbReference>
<dbReference type="NCBIfam" id="NF009920">
    <property type="entry name" value="PRK13381.1"/>
    <property type="match status" value="1"/>
</dbReference>
<dbReference type="PANTHER" id="PTHR42994">
    <property type="entry name" value="PEPTIDASE T"/>
    <property type="match status" value="1"/>
</dbReference>
<dbReference type="PANTHER" id="PTHR42994:SF1">
    <property type="entry name" value="PEPTIDASE T"/>
    <property type="match status" value="1"/>
</dbReference>
<dbReference type="Pfam" id="PF07687">
    <property type="entry name" value="M20_dimer"/>
    <property type="match status" value="1"/>
</dbReference>
<dbReference type="Pfam" id="PF01546">
    <property type="entry name" value="Peptidase_M20"/>
    <property type="match status" value="1"/>
</dbReference>
<dbReference type="PIRSF" id="PIRSF037215">
    <property type="entry name" value="Peptidase_M20B"/>
    <property type="match status" value="1"/>
</dbReference>
<dbReference type="SUPFAM" id="SSF55031">
    <property type="entry name" value="Bacterial exopeptidase dimerisation domain"/>
    <property type="match status" value="1"/>
</dbReference>
<dbReference type="SUPFAM" id="SSF53187">
    <property type="entry name" value="Zn-dependent exopeptidases"/>
    <property type="match status" value="1"/>
</dbReference>
<dbReference type="PROSITE" id="PS00758">
    <property type="entry name" value="ARGE_DAPE_CPG2_1"/>
    <property type="match status" value="1"/>
</dbReference>
<dbReference type="PROSITE" id="PS00759">
    <property type="entry name" value="ARGE_DAPE_CPG2_2"/>
    <property type="match status" value="1"/>
</dbReference>
<sequence length="410" mass="45611">MKNEIIERFTSYVKVDTQSDENNENCPSTPGQLTLANMLADELKSIGMTDITVDDNGYVMATLPANTDKDVPTVGFLAHVDTATDFTGKNVNPQIIESYDGHDIVLNDKLNVVLSPEQFPELSRYKGQTLITTDGTTLLGADNKAGIAEIMTAMAYLIKHPDIKHGTIRVAFTPDEEIGRGPHKFDVGRFNAAFAYTIDGGPLGELQYESFNAAAAKLTCYGKSVHPGTAKNKMVNASKIAMEFHHALPKEEAPEYTEGYEGFYHLLSMNGDVSEAALSYIIRDFDRDRFAERKEYMQKTADALAAKYGNESIKLELRDQYYNMREKIEPVKEIVDVAYQAMKNLDIDPIIEPIRGGTDGSQLSYMGLPTPNIFTGGQNFHGKYEYISVDHMEKAVNVIVEIARLFEERA</sequence>
<proteinExistence type="inferred from homology"/>
<reference key="1">
    <citation type="journal article" date="2007" name="Nat. Biotechnol.">
        <title>Comparative analysis of the complete genome sequence of the plant growth-promoting bacterium Bacillus amyloliquefaciens FZB42.</title>
        <authorList>
            <person name="Chen X.H."/>
            <person name="Koumoutsi A."/>
            <person name="Scholz R."/>
            <person name="Eisenreich A."/>
            <person name="Schneider K."/>
            <person name="Heinemeyer I."/>
            <person name="Morgenstern B."/>
            <person name="Voss B."/>
            <person name="Hess W.R."/>
            <person name="Reva O."/>
            <person name="Junge H."/>
            <person name="Voigt B."/>
            <person name="Jungblut P.R."/>
            <person name="Vater J."/>
            <person name="Suessmuth R."/>
            <person name="Liesegang H."/>
            <person name="Strittmatter A."/>
            <person name="Gottschalk G."/>
            <person name="Borriss R."/>
        </authorList>
    </citation>
    <scope>NUCLEOTIDE SEQUENCE [LARGE SCALE GENOMIC DNA]</scope>
    <source>
        <strain>DSM 23117 / BGSC 10A6 / LMG 26770 / FZB42</strain>
    </source>
</reference>
<feature type="chain" id="PRO_1000017837" description="Peptidase T">
    <location>
        <begin position="1"/>
        <end position="410"/>
    </location>
</feature>
<feature type="active site" evidence="1">
    <location>
        <position position="81"/>
    </location>
</feature>
<feature type="active site" description="Proton acceptor" evidence="1">
    <location>
        <position position="176"/>
    </location>
</feature>
<feature type="binding site" evidence="1">
    <location>
        <position position="79"/>
    </location>
    <ligand>
        <name>Zn(2+)</name>
        <dbReference type="ChEBI" id="CHEBI:29105"/>
        <label>1</label>
    </ligand>
</feature>
<feature type="binding site" evidence="1">
    <location>
        <position position="142"/>
    </location>
    <ligand>
        <name>Zn(2+)</name>
        <dbReference type="ChEBI" id="CHEBI:29105"/>
        <label>1</label>
    </ligand>
</feature>
<feature type="binding site" evidence="1">
    <location>
        <position position="142"/>
    </location>
    <ligand>
        <name>Zn(2+)</name>
        <dbReference type="ChEBI" id="CHEBI:29105"/>
        <label>2</label>
    </ligand>
</feature>
<feature type="binding site" evidence="1">
    <location>
        <position position="177"/>
    </location>
    <ligand>
        <name>Zn(2+)</name>
        <dbReference type="ChEBI" id="CHEBI:29105"/>
        <label>2</label>
    </ligand>
</feature>
<feature type="binding site" evidence="1">
    <location>
        <position position="199"/>
    </location>
    <ligand>
        <name>Zn(2+)</name>
        <dbReference type="ChEBI" id="CHEBI:29105"/>
        <label>1</label>
    </ligand>
</feature>
<feature type="binding site" evidence="1">
    <location>
        <position position="381"/>
    </location>
    <ligand>
        <name>Zn(2+)</name>
        <dbReference type="ChEBI" id="CHEBI:29105"/>
        <label>2</label>
    </ligand>
</feature>